<accession>B1ZB15</accession>
<dbReference type="EC" id="1.14.99.46" evidence="1"/>
<dbReference type="EMBL" id="CP001029">
    <property type="protein sequence ID" value="ACB79250.1"/>
    <property type="molecule type" value="Genomic_DNA"/>
</dbReference>
<dbReference type="SMR" id="B1ZB15"/>
<dbReference type="STRING" id="441620.Mpop_1075"/>
<dbReference type="KEGG" id="mpo:Mpop_1075"/>
<dbReference type="eggNOG" id="COG2141">
    <property type="taxonomic scope" value="Bacteria"/>
</dbReference>
<dbReference type="HOGENOM" id="CLU_027853_1_1_5"/>
<dbReference type="Proteomes" id="UP000007136">
    <property type="component" value="Chromosome"/>
</dbReference>
<dbReference type="GO" id="GO:0008726">
    <property type="term" value="F:alkanesulfonate monooxygenase activity"/>
    <property type="evidence" value="ECO:0007669"/>
    <property type="project" value="TreeGrafter"/>
</dbReference>
<dbReference type="GO" id="GO:0052614">
    <property type="term" value="F:uracil oxygenase activity"/>
    <property type="evidence" value="ECO:0007669"/>
    <property type="project" value="UniProtKB-EC"/>
</dbReference>
<dbReference type="GO" id="GO:0046306">
    <property type="term" value="P:alkanesulfonate catabolic process"/>
    <property type="evidence" value="ECO:0007669"/>
    <property type="project" value="TreeGrafter"/>
</dbReference>
<dbReference type="GO" id="GO:0019740">
    <property type="term" value="P:nitrogen utilization"/>
    <property type="evidence" value="ECO:0007669"/>
    <property type="project" value="UniProtKB-UniRule"/>
</dbReference>
<dbReference type="GO" id="GO:0006212">
    <property type="term" value="P:uracil catabolic process"/>
    <property type="evidence" value="ECO:0007669"/>
    <property type="project" value="UniProtKB-UniRule"/>
</dbReference>
<dbReference type="CDD" id="cd01094">
    <property type="entry name" value="Alkanesulfonate_monoxygenase"/>
    <property type="match status" value="1"/>
</dbReference>
<dbReference type="FunFam" id="3.20.20.30:FF:000003">
    <property type="entry name" value="Pyrimidine monooxygenase RutA"/>
    <property type="match status" value="1"/>
</dbReference>
<dbReference type="Gene3D" id="3.20.20.30">
    <property type="entry name" value="Luciferase-like domain"/>
    <property type="match status" value="1"/>
</dbReference>
<dbReference type="HAMAP" id="MF_01699">
    <property type="entry name" value="RutA"/>
    <property type="match status" value="1"/>
</dbReference>
<dbReference type="InterPro" id="IPR011251">
    <property type="entry name" value="Luciferase-like_dom"/>
</dbReference>
<dbReference type="InterPro" id="IPR036661">
    <property type="entry name" value="Luciferase-like_sf"/>
</dbReference>
<dbReference type="InterPro" id="IPR019914">
    <property type="entry name" value="Pyrimidine_monooxygenase_RutA"/>
</dbReference>
<dbReference type="InterPro" id="IPR050172">
    <property type="entry name" value="SsuD_RutA_monooxygenase"/>
</dbReference>
<dbReference type="NCBIfam" id="TIGR03612">
    <property type="entry name" value="RutA"/>
    <property type="match status" value="1"/>
</dbReference>
<dbReference type="PANTHER" id="PTHR42847">
    <property type="entry name" value="ALKANESULFONATE MONOOXYGENASE"/>
    <property type="match status" value="1"/>
</dbReference>
<dbReference type="PANTHER" id="PTHR42847:SF4">
    <property type="entry name" value="ALKANESULFONATE MONOOXYGENASE-RELATED"/>
    <property type="match status" value="1"/>
</dbReference>
<dbReference type="Pfam" id="PF00296">
    <property type="entry name" value="Bac_luciferase"/>
    <property type="match status" value="1"/>
</dbReference>
<dbReference type="SUPFAM" id="SSF51679">
    <property type="entry name" value="Bacterial luciferase-like"/>
    <property type="match status" value="1"/>
</dbReference>
<name>RUTA_METPB</name>
<protein>
    <recommendedName>
        <fullName evidence="1">Pyrimidine monooxygenase RutA</fullName>
        <ecNumber evidence="1">1.14.99.46</ecNumber>
    </recommendedName>
</protein>
<evidence type="ECO:0000255" key="1">
    <source>
        <dbReference type="HAMAP-Rule" id="MF_01699"/>
    </source>
</evidence>
<proteinExistence type="inferred from homology"/>
<comment type="function">
    <text evidence="1">Catalyzes the pyrimidine ring opening between N-3 and C-4 by an unusual flavin hydroperoxide-catalyzed mechanism, adding oxygen atoms in the process to yield ureidoacrylate peracid, that immediately reacts with FMN forming ureidoacrylate and FMN-N(5)-oxide. The FMN-N(5)-oxide reacts spontaneously with NADH to produce FMN. Requires the flavin reductase RutF to regenerate FMN in vivo.</text>
</comment>
<comment type="catalytic activity">
    <reaction evidence="1">
        <text>uracil + FMNH2 + NADH + O2 = (Z)-3-ureidoacrylate + FMN + NAD(+) + H2O + H(+)</text>
        <dbReference type="Rhea" id="RHEA:31587"/>
        <dbReference type="ChEBI" id="CHEBI:15377"/>
        <dbReference type="ChEBI" id="CHEBI:15378"/>
        <dbReference type="ChEBI" id="CHEBI:15379"/>
        <dbReference type="ChEBI" id="CHEBI:17568"/>
        <dbReference type="ChEBI" id="CHEBI:57540"/>
        <dbReference type="ChEBI" id="CHEBI:57618"/>
        <dbReference type="ChEBI" id="CHEBI:57945"/>
        <dbReference type="ChEBI" id="CHEBI:58210"/>
        <dbReference type="ChEBI" id="CHEBI:59891"/>
        <dbReference type="EC" id="1.14.99.46"/>
    </reaction>
</comment>
<comment type="catalytic activity">
    <reaction evidence="1">
        <text>thymine + FMNH2 + NADH + O2 = (Z)-2-methylureidoacrylate + FMN + NAD(+) + H2O + H(+)</text>
        <dbReference type="Rhea" id="RHEA:31599"/>
        <dbReference type="ChEBI" id="CHEBI:15377"/>
        <dbReference type="ChEBI" id="CHEBI:15378"/>
        <dbReference type="ChEBI" id="CHEBI:15379"/>
        <dbReference type="ChEBI" id="CHEBI:17821"/>
        <dbReference type="ChEBI" id="CHEBI:57540"/>
        <dbReference type="ChEBI" id="CHEBI:57618"/>
        <dbReference type="ChEBI" id="CHEBI:57945"/>
        <dbReference type="ChEBI" id="CHEBI:58210"/>
        <dbReference type="ChEBI" id="CHEBI:143783"/>
        <dbReference type="EC" id="1.14.99.46"/>
    </reaction>
</comment>
<comment type="similarity">
    <text evidence="1">Belongs to the NtaA/SnaA/DszA monooxygenase family. RutA subfamily.</text>
</comment>
<feature type="chain" id="PRO_0000402632" description="Pyrimidine monooxygenase RutA">
    <location>
        <begin position="1"/>
        <end position="376"/>
    </location>
</feature>
<feature type="binding site" evidence="1">
    <location>
        <begin position="61"/>
        <end position="62"/>
    </location>
    <ligand>
        <name>FMN</name>
        <dbReference type="ChEBI" id="CHEBI:58210"/>
    </ligand>
</feature>
<feature type="binding site" evidence="1">
    <location>
        <position position="127"/>
    </location>
    <ligand>
        <name>FMN</name>
        <dbReference type="ChEBI" id="CHEBI:58210"/>
    </ligand>
</feature>
<feature type="binding site" evidence="1">
    <location>
        <position position="136"/>
    </location>
    <ligand>
        <name>FMN</name>
        <dbReference type="ChEBI" id="CHEBI:58210"/>
    </ligand>
</feature>
<feature type="binding site" evidence="1">
    <location>
        <begin position="152"/>
        <end position="153"/>
    </location>
    <ligand>
        <name>FMN</name>
        <dbReference type="ChEBI" id="CHEBI:58210"/>
    </ligand>
</feature>
<feature type="binding site" evidence="1">
    <location>
        <position position="202"/>
    </location>
    <ligand>
        <name>FMN</name>
        <dbReference type="ChEBI" id="CHEBI:58210"/>
    </ligand>
</feature>
<reference key="1">
    <citation type="submission" date="2008-04" db="EMBL/GenBank/DDBJ databases">
        <title>Complete sequence of chromosome of Methylobacterium populi BJ001.</title>
        <authorList>
            <consortium name="US DOE Joint Genome Institute"/>
            <person name="Copeland A."/>
            <person name="Lucas S."/>
            <person name="Lapidus A."/>
            <person name="Glavina del Rio T."/>
            <person name="Dalin E."/>
            <person name="Tice H."/>
            <person name="Bruce D."/>
            <person name="Goodwin L."/>
            <person name="Pitluck S."/>
            <person name="Chertkov O."/>
            <person name="Brettin T."/>
            <person name="Detter J.C."/>
            <person name="Han C."/>
            <person name="Kuske C.R."/>
            <person name="Schmutz J."/>
            <person name="Larimer F."/>
            <person name="Land M."/>
            <person name="Hauser L."/>
            <person name="Kyrpides N."/>
            <person name="Mikhailova N."/>
            <person name="Marx C."/>
            <person name="Richardson P."/>
        </authorList>
    </citation>
    <scope>NUCLEOTIDE SEQUENCE [LARGE SCALE GENOMIC DNA]</scope>
    <source>
        <strain>ATCC BAA-705 / NCIMB 13946 / BJ001</strain>
    </source>
</reference>
<gene>
    <name evidence="1" type="primary">rutA</name>
    <name type="ordered locus">Mpop_1075</name>
</gene>
<organism>
    <name type="scientific">Methylorubrum populi (strain ATCC BAA-705 / NCIMB 13946 / BJ001)</name>
    <name type="common">Methylobacterium populi</name>
    <dbReference type="NCBI Taxonomy" id="441620"/>
    <lineage>
        <taxon>Bacteria</taxon>
        <taxon>Pseudomonadati</taxon>
        <taxon>Pseudomonadota</taxon>
        <taxon>Alphaproteobacteria</taxon>
        <taxon>Hyphomicrobiales</taxon>
        <taxon>Methylobacteriaceae</taxon>
        <taxon>Methylorubrum</taxon>
    </lineage>
</organism>
<keyword id="KW-0285">Flavoprotein</keyword>
<keyword id="KW-0288">FMN</keyword>
<keyword id="KW-0503">Monooxygenase</keyword>
<keyword id="KW-0521">NADP</keyword>
<keyword id="KW-0560">Oxidoreductase</keyword>
<sequence>MTQANNHANNHAMNIGVFIPIGNNGWLLSENAPQYMPSFELNKQITLKAEQYGLDFALSMIKLRGFGGKTEFWDHNLESFTLMAGLAAVTSRIKLYATAPTLCLPPAIVARMASTIDSISNGRFGLNLVTGWQRPEYSQMGLWPGDEYFGRRYAYLSEYAQVLRDLWETGSSDLKGEFFQMEDCRLSPRPQAEMKIICAGQSAAGMAFTATYADYNFCFGKGVNTPTAFAPTVERLEEAKAKTGRDVSSYVLFMIISDETDEAARAKWEHYKAGADQEAIAWLGLQGAADTKSGADTNIRQMADPTSAVNINMGTLVGSYATVAALLDEVVTVPGTGGVLLVFDDFLKGLDDFGTKIQPLMASRRHVTGEALAEVA</sequence>